<sequence length="160" mass="17544">MAEKTYPMTLEEKEKLEKELEELKLVRRPEVVERIKIARSYGDLSENSEYEAAKDEQAFVEGQISSLETKIRYAEIVNSDAVAQDEVAIGKTVTIQEIGEDEEEVYIIVGSAGADAFAGKVSNESPIGQALIGKKTGDTATIETPVGSYDVKILKVEKTA</sequence>
<keyword id="KW-0175">Coiled coil</keyword>
<keyword id="KW-0238">DNA-binding</keyword>
<keyword id="KW-1185">Reference proteome</keyword>
<keyword id="KW-0804">Transcription</keyword>
<keyword id="KW-0805">Transcription regulation</keyword>
<proteinExistence type="inferred from homology"/>
<name>GREA_STRP2</name>
<evidence type="ECO:0000255" key="1">
    <source>
        <dbReference type="HAMAP-Rule" id="MF_00105"/>
    </source>
</evidence>
<feature type="chain" id="PRO_1000034308" description="Transcription elongation factor GreA">
    <location>
        <begin position="1"/>
        <end position="160"/>
    </location>
</feature>
<feature type="coiled-coil region" evidence="1">
    <location>
        <begin position="1"/>
        <end position="72"/>
    </location>
</feature>
<organism>
    <name type="scientific">Streptococcus pneumoniae serotype 2 (strain D39 / NCTC 7466)</name>
    <dbReference type="NCBI Taxonomy" id="373153"/>
    <lineage>
        <taxon>Bacteria</taxon>
        <taxon>Bacillati</taxon>
        <taxon>Bacillota</taxon>
        <taxon>Bacilli</taxon>
        <taxon>Lactobacillales</taxon>
        <taxon>Streptococcaceae</taxon>
        <taxon>Streptococcus</taxon>
    </lineage>
</organism>
<protein>
    <recommendedName>
        <fullName evidence="1">Transcription elongation factor GreA</fullName>
    </recommendedName>
    <alternativeName>
        <fullName evidence="1">Transcript cleavage factor GreA</fullName>
    </alternativeName>
</protein>
<accession>Q04HS9</accession>
<gene>
    <name evidence="1" type="primary">greA</name>
    <name type="ordered locus">SPD_1345</name>
</gene>
<comment type="function">
    <text evidence="1">Necessary for efficient RNA polymerase transcription elongation past template-encoded arresting sites. The arresting sites in DNA have the property of trapping a certain fraction of elongating RNA polymerases that pass through, resulting in locked ternary complexes. Cleavage of the nascent transcript by cleavage factors such as GreA or GreB allows the resumption of elongation from the new 3'terminus. GreA releases sequences of 2 to 3 nucleotides.</text>
</comment>
<comment type="similarity">
    <text evidence="1">Belongs to the GreA/GreB family.</text>
</comment>
<dbReference type="EMBL" id="CP000410">
    <property type="protein sequence ID" value="ABJ54786.1"/>
    <property type="molecule type" value="Genomic_DNA"/>
</dbReference>
<dbReference type="RefSeq" id="WP_000818760.1">
    <property type="nucleotide sequence ID" value="NZ_JAMLJR010000008.1"/>
</dbReference>
<dbReference type="SMR" id="Q04HS9"/>
<dbReference type="PaxDb" id="373153-SPD_1345"/>
<dbReference type="GeneID" id="45653244"/>
<dbReference type="KEGG" id="spd:SPD_1345"/>
<dbReference type="eggNOG" id="COG0782">
    <property type="taxonomic scope" value="Bacteria"/>
</dbReference>
<dbReference type="HOGENOM" id="CLU_101379_2_1_9"/>
<dbReference type="BioCyc" id="SPNE373153:G1G6V-1451-MONOMER"/>
<dbReference type="Proteomes" id="UP000001452">
    <property type="component" value="Chromosome"/>
</dbReference>
<dbReference type="GO" id="GO:0003677">
    <property type="term" value="F:DNA binding"/>
    <property type="evidence" value="ECO:0007669"/>
    <property type="project" value="UniProtKB-UniRule"/>
</dbReference>
<dbReference type="GO" id="GO:0070063">
    <property type="term" value="F:RNA polymerase binding"/>
    <property type="evidence" value="ECO:0007669"/>
    <property type="project" value="InterPro"/>
</dbReference>
<dbReference type="GO" id="GO:0006354">
    <property type="term" value="P:DNA-templated transcription elongation"/>
    <property type="evidence" value="ECO:0007669"/>
    <property type="project" value="TreeGrafter"/>
</dbReference>
<dbReference type="GO" id="GO:0032784">
    <property type="term" value="P:regulation of DNA-templated transcription elongation"/>
    <property type="evidence" value="ECO:0007669"/>
    <property type="project" value="UniProtKB-UniRule"/>
</dbReference>
<dbReference type="FunFam" id="1.10.287.180:FF:000001">
    <property type="entry name" value="Transcription elongation factor GreA"/>
    <property type="match status" value="1"/>
</dbReference>
<dbReference type="FunFam" id="3.10.50.30:FF:000001">
    <property type="entry name" value="Transcription elongation factor GreA"/>
    <property type="match status" value="1"/>
</dbReference>
<dbReference type="Gene3D" id="3.10.50.30">
    <property type="entry name" value="Transcription elongation factor, GreA/GreB, C-terminal domain"/>
    <property type="match status" value="1"/>
</dbReference>
<dbReference type="Gene3D" id="1.10.287.180">
    <property type="entry name" value="Transcription elongation factor, GreA/GreB, N-terminal domain"/>
    <property type="match status" value="1"/>
</dbReference>
<dbReference type="HAMAP" id="MF_00105">
    <property type="entry name" value="GreA_GreB"/>
    <property type="match status" value="1"/>
</dbReference>
<dbReference type="InterPro" id="IPR036953">
    <property type="entry name" value="GreA/GreB_C_sf"/>
</dbReference>
<dbReference type="InterPro" id="IPR018151">
    <property type="entry name" value="TF_GreA/GreB_CS"/>
</dbReference>
<dbReference type="InterPro" id="IPR006359">
    <property type="entry name" value="Tscrpt_elong_fac_GreA"/>
</dbReference>
<dbReference type="InterPro" id="IPR028624">
    <property type="entry name" value="Tscrpt_elong_fac_GreA/B"/>
</dbReference>
<dbReference type="InterPro" id="IPR001437">
    <property type="entry name" value="Tscrpt_elong_fac_GreA/B_C"/>
</dbReference>
<dbReference type="InterPro" id="IPR023459">
    <property type="entry name" value="Tscrpt_elong_fac_GreA/B_fam"/>
</dbReference>
<dbReference type="InterPro" id="IPR022691">
    <property type="entry name" value="Tscrpt_elong_fac_GreA/B_N"/>
</dbReference>
<dbReference type="InterPro" id="IPR036805">
    <property type="entry name" value="Tscrpt_elong_fac_GreA/B_N_sf"/>
</dbReference>
<dbReference type="NCBIfam" id="TIGR01462">
    <property type="entry name" value="greA"/>
    <property type="match status" value="1"/>
</dbReference>
<dbReference type="NCBIfam" id="NF001260">
    <property type="entry name" value="PRK00226.1-1"/>
    <property type="match status" value="1"/>
</dbReference>
<dbReference type="NCBIfam" id="NF001263">
    <property type="entry name" value="PRK00226.1-4"/>
    <property type="match status" value="1"/>
</dbReference>
<dbReference type="PANTHER" id="PTHR30437">
    <property type="entry name" value="TRANSCRIPTION ELONGATION FACTOR GREA"/>
    <property type="match status" value="1"/>
</dbReference>
<dbReference type="PANTHER" id="PTHR30437:SF4">
    <property type="entry name" value="TRANSCRIPTION ELONGATION FACTOR GREA"/>
    <property type="match status" value="1"/>
</dbReference>
<dbReference type="Pfam" id="PF01272">
    <property type="entry name" value="GreA_GreB"/>
    <property type="match status" value="1"/>
</dbReference>
<dbReference type="Pfam" id="PF03449">
    <property type="entry name" value="GreA_GreB_N"/>
    <property type="match status" value="1"/>
</dbReference>
<dbReference type="PIRSF" id="PIRSF006092">
    <property type="entry name" value="GreA_GreB"/>
    <property type="match status" value="1"/>
</dbReference>
<dbReference type="SUPFAM" id="SSF54534">
    <property type="entry name" value="FKBP-like"/>
    <property type="match status" value="1"/>
</dbReference>
<dbReference type="SUPFAM" id="SSF46557">
    <property type="entry name" value="GreA transcript cleavage protein, N-terminal domain"/>
    <property type="match status" value="1"/>
</dbReference>
<dbReference type="PROSITE" id="PS00829">
    <property type="entry name" value="GREAB_1"/>
    <property type="match status" value="1"/>
</dbReference>
<dbReference type="PROSITE" id="PS00830">
    <property type="entry name" value="GREAB_2"/>
    <property type="match status" value="1"/>
</dbReference>
<reference key="1">
    <citation type="journal article" date="2007" name="J. Bacteriol.">
        <title>Genome sequence of Avery's virulent serotype 2 strain D39 of Streptococcus pneumoniae and comparison with that of unencapsulated laboratory strain R6.</title>
        <authorList>
            <person name="Lanie J.A."/>
            <person name="Ng W.-L."/>
            <person name="Kazmierczak K.M."/>
            <person name="Andrzejewski T.M."/>
            <person name="Davidsen T.M."/>
            <person name="Wayne K.J."/>
            <person name="Tettelin H."/>
            <person name="Glass J.I."/>
            <person name="Winkler M.E."/>
        </authorList>
    </citation>
    <scope>NUCLEOTIDE SEQUENCE [LARGE SCALE GENOMIC DNA]</scope>
    <source>
        <strain>D39 / NCTC 7466</strain>
    </source>
</reference>